<protein>
    <recommendedName>
        <fullName evidence="1">Phenylalanine--tRNA ligase beta subunit</fullName>
        <ecNumber evidence="1">6.1.1.20</ecNumber>
    </recommendedName>
    <alternativeName>
        <fullName evidence="1">Phenylalanyl-tRNA synthetase beta subunit</fullName>
        <shortName evidence="1">PheRS</shortName>
    </alternativeName>
</protein>
<reference key="1">
    <citation type="journal article" date="2002" name="Nat. Biotechnol.">
        <title>Genome sequence of the dissimilatory metal ion-reducing bacterium Shewanella oneidensis.</title>
        <authorList>
            <person name="Heidelberg J.F."/>
            <person name="Paulsen I.T."/>
            <person name="Nelson K.E."/>
            <person name="Gaidos E.J."/>
            <person name="Nelson W.C."/>
            <person name="Read T.D."/>
            <person name="Eisen J.A."/>
            <person name="Seshadri R."/>
            <person name="Ward N.L."/>
            <person name="Methe B.A."/>
            <person name="Clayton R.A."/>
            <person name="Meyer T."/>
            <person name="Tsapin A."/>
            <person name="Scott J."/>
            <person name="Beanan M.J."/>
            <person name="Brinkac L.M."/>
            <person name="Daugherty S.C."/>
            <person name="DeBoy R.T."/>
            <person name="Dodson R.J."/>
            <person name="Durkin A.S."/>
            <person name="Haft D.H."/>
            <person name="Kolonay J.F."/>
            <person name="Madupu R."/>
            <person name="Peterson J.D."/>
            <person name="Umayam L.A."/>
            <person name="White O."/>
            <person name="Wolf A.M."/>
            <person name="Vamathevan J.J."/>
            <person name="Weidman J.F."/>
            <person name="Impraim M."/>
            <person name="Lee K."/>
            <person name="Berry K.J."/>
            <person name="Lee C."/>
            <person name="Mueller J."/>
            <person name="Khouri H.M."/>
            <person name="Gill J."/>
            <person name="Utterback T.R."/>
            <person name="McDonald L.A."/>
            <person name="Feldblyum T.V."/>
            <person name="Smith H.O."/>
            <person name="Venter J.C."/>
            <person name="Nealson K.H."/>
            <person name="Fraser C.M."/>
        </authorList>
    </citation>
    <scope>NUCLEOTIDE SEQUENCE [LARGE SCALE GENOMIC DNA]</scope>
    <source>
        <strain>ATCC 700550 / JCM 31522 / CIP 106686 / LMG 19005 / NCIMB 14063 / MR-1</strain>
    </source>
</reference>
<name>SYFB_SHEON</name>
<comment type="catalytic activity">
    <reaction evidence="1">
        <text>tRNA(Phe) + L-phenylalanine + ATP = L-phenylalanyl-tRNA(Phe) + AMP + diphosphate + H(+)</text>
        <dbReference type="Rhea" id="RHEA:19413"/>
        <dbReference type="Rhea" id="RHEA-COMP:9668"/>
        <dbReference type="Rhea" id="RHEA-COMP:9699"/>
        <dbReference type="ChEBI" id="CHEBI:15378"/>
        <dbReference type="ChEBI" id="CHEBI:30616"/>
        <dbReference type="ChEBI" id="CHEBI:33019"/>
        <dbReference type="ChEBI" id="CHEBI:58095"/>
        <dbReference type="ChEBI" id="CHEBI:78442"/>
        <dbReference type="ChEBI" id="CHEBI:78531"/>
        <dbReference type="ChEBI" id="CHEBI:456215"/>
        <dbReference type="EC" id="6.1.1.20"/>
    </reaction>
</comment>
<comment type="cofactor">
    <cofactor evidence="1">
        <name>Mg(2+)</name>
        <dbReference type="ChEBI" id="CHEBI:18420"/>
    </cofactor>
    <text evidence="1">Binds 2 magnesium ions per tetramer.</text>
</comment>
<comment type="subunit">
    <text evidence="1">Tetramer of two alpha and two beta subunits.</text>
</comment>
<comment type="subcellular location">
    <subcellularLocation>
        <location evidence="1">Cytoplasm</location>
    </subcellularLocation>
</comment>
<comment type="similarity">
    <text evidence="1">Belongs to the phenylalanyl-tRNA synthetase beta subunit family. Type 1 subfamily.</text>
</comment>
<gene>
    <name evidence="1" type="primary">pheT</name>
    <name type="ordered locus">SO_2086</name>
</gene>
<keyword id="KW-0030">Aminoacyl-tRNA synthetase</keyword>
<keyword id="KW-0067">ATP-binding</keyword>
<keyword id="KW-0963">Cytoplasm</keyword>
<keyword id="KW-0436">Ligase</keyword>
<keyword id="KW-0460">Magnesium</keyword>
<keyword id="KW-0479">Metal-binding</keyword>
<keyword id="KW-0547">Nucleotide-binding</keyword>
<keyword id="KW-0648">Protein biosynthesis</keyword>
<keyword id="KW-1185">Reference proteome</keyword>
<keyword id="KW-0694">RNA-binding</keyword>
<keyword id="KW-0820">tRNA-binding</keyword>
<evidence type="ECO:0000255" key="1">
    <source>
        <dbReference type="HAMAP-Rule" id="MF_00283"/>
    </source>
</evidence>
<accession>Q8EF99</accession>
<dbReference type="EC" id="6.1.1.20" evidence="1"/>
<dbReference type="EMBL" id="AE014299">
    <property type="protein sequence ID" value="AAN55133.1"/>
    <property type="molecule type" value="Genomic_DNA"/>
</dbReference>
<dbReference type="RefSeq" id="NP_717689.1">
    <property type="nucleotide sequence ID" value="NC_004347.2"/>
</dbReference>
<dbReference type="RefSeq" id="WP_011072150.1">
    <property type="nucleotide sequence ID" value="NC_004347.2"/>
</dbReference>
<dbReference type="SMR" id="Q8EF99"/>
<dbReference type="STRING" id="211586.SO_2086"/>
<dbReference type="PaxDb" id="211586-SO_2086"/>
<dbReference type="KEGG" id="son:SO_2086"/>
<dbReference type="PATRIC" id="fig|211586.12.peg.2002"/>
<dbReference type="eggNOG" id="COG0072">
    <property type="taxonomic scope" value="Bacteria"/>
</dbReference>
<dbReference type="eggNOG" id="COG0073">
    <property type="taxonomic scope" value="Bacteria"/>
</dbReference>
<dbReference type="HOGENOM" id="CLU_016891_0_0_6"/>
<dbReference type="OrthoDB" id="9805455at2"/>
<dbReference type="PhylomeDB" id="Q8EF99"/>
<dbReference type="BioCyc" id="SONE211586:G1GMP-1917-MONOMER"/>
<dbReference type="Proteomes" id="UP000008186">
    <property type="component" value="Chromosome"/>
</dbReference>
<dbReference type="GO" id="GO:0009328">
    <property type="term" value="C:phenylalanine-tRNA ligase complex"/>
    <property type="evidence" value="ECO:0000318"/>
    <property type="project" value="GO_Central"/>
</dbReference>
<dbReference type="GO" id="GO:0005524">
    <property type="term" value="F:ATP binding"/>
    <property type="evidence" value="ECO:0007669"/>
    <property type="project" value="UniProtKB-UniRule"/>
</dbReference>
<dbReference type="GO" id="GO:0000287">
    <property type="term" value="F:magnesium ion binding"/>
    <property type="evidence" value="ECO:0007669"/>
    <property type="project" value="UniProtKB-UniRule"/>
</dbReference>
<dbReference type="GO" id="GO:0004826">
    <property type="term" value="F:phenylalanine-tRNA ligase activity"/>
    <property type="evidence" value="ECO:0007669"/>
    <property type="project" value="UniProtKB-UniRule"/>
</dbReference>
<dbReference type="GO" id="GO:0000049">
    <property type="term" value="F:tRNA binding"/>
    <property type="evidence" value="ECO:0007669"/>
    <property type="project" value="UniProtKB-KW"/>
</dbReference>
<dbReference type="GO" id="GO:0006432">
    <property type="term" value="P:phenylalanyl-tRNA aminoacylation"/>
    <property type="evidence" value="ECO:0000318"/>
    <property type="project" value="GO_Central"/>
</dbReference>
<dbReference type="CDD" id="cd00769">
    <property type="entry name" value="PheRS_beta_core"/>
    <property type="match status" value="1"/>
</dbReference>
<dbReference type="CDD" id="cd02796">
    <property type="entry name" value="tRNA_bind_bactPheRS"/>
    <property type="match status" value="1"/>
</dbReference>
<dbReference type="FunFam" id="2.40.50.140:FF:000045">
    <property type="entry name" value="Phenylalanine--tRNA ligase beta subunit"/>
    <property type="match status" value="1"/>
</dbReference>
<dbReference type="FunFam" id="3.30.56.10:FF:000002">
    <property type="entry name" value="Phenylalanine--tRNA ligase beta subunit"/>
    <property type="match status" value="1"/>
</dbReference>
<dbReference type="FunFam" id="3.30.70.380:FF:000001">
    <property type="entry name" value="Phenylalanine--tRNA ligase beta subunit"/>
    <property type="match status" value="1"/>
</dbReference>
<dbReference type="FunFam" id="3.30.930.10:FF:000022">
    <property type="entry name" value="Phenylalanine--tRNA ligase beta subunit"/>
    <property type="match status" value="1"/>
</dbReference>
<dbReference type="FunFam" id="3.50.40.10:FF:000001">
    <property type="entry name" value="Phenylalanine--tRNA ligase beta subunit"/>
    <property type="match status" value="1"/>
</dbReference>
<dbReference type="Gene3D" id="3.30.56.10">
    <property type="match status" value="2"/>
</dbReference>
<dbReference type="Gene3D" id="3.30.930.10">
    <property type="entry name" value="Bira Bifunctional Protein, Domain 2"/>
    <property type="match status" value="1"/>
</dbReference>
<dbReference type="Gene3D" id="3.30.70.380">
    <property type="entry name" value="Ferrodoxin-fold anticodon-binding domain"/>
    <property type="match status" value="1"/>
</dbReference>
<dbReference type="Gene3D" id="2.40.50.140">
    <property type="entry name" value="Nucleic acid-binding proteins"/>
    <property type="match status" value="1"/>
</dbReference>
<dbReference type="Gene3D" id="3.50.40.10">
    <property type="entry name" value="Phenylalanyl-trna Synthetase, Chain B, domain 3"/>
    <property type="match status" value="1"/>
</dbReference>
<dbReference type="HAMAP" id="MF_00283">
    <property type="entry name" value="Phe_tRNA_synth_beta1"/>
    <property type="match status" value="1"/>
</dbReference>
<dbReference type="InterPro" id="IPR045864">
    <property type="entry name" value="aa-tRNA-synth_II/BPL/LPL"/>
</dbReference>
<dbReference type="InterPro" id="IPR005146">
    <property type="entry name" value="B3/B4_tRNA-bd"/>
</dbReference>
<dbReference type="InterPro" id="IPR009061">
    <property type="entry name" value="DNA-bd_dom_put_sf"/>
</dbReference>
<dbReference type="InterPro" id="IPR005121">
    <property type="entry name" value="Fdx_antiC-bd"/>
</dbReference>
<dbReference type="InterPro" id="IPR036690">
    <property type="entry name" value="Fdx_antiC-bd_sf"/>
</dbReference>
<dbReference type="InterPro" id="IPR012340">
    <property type="entry name" value="NA-bd_OB-fold"/>
</dbReference>
<dbReference type="InterPro" id="IPR045060">
    <property type="entry name" value="Phe-tRNA-ligase_IIc_bsu"/>
</dbReference>
<dbReference type="InterPro" id="IPR004532">
    <property type="entry name" value="Phe-tRNA-ligase_IIc_bsu_bact"/>
</dbReference>
<dbReference type="InterPro" id="IPR020825">
    <property type="entry name" value="Phe-tRNA_synthase-like_B3/B4"/>
</dbReference>
<dbReference type="InterPro" id="IPR041616">
    <property type="entry name" value="PheRS_beta_core"/>
</dbReference>
<dbReference type="InterPro" id="IPR002547">
    <property type="entry name" value="tRNA-bd_dom"/>
</dbReference>
<dbReference type="InterPro" id="IPR033714">
    <property type="entry name" value="tRNA_bind_bactPheRS"/>
</dbReference>
<dbReference type="InterPro" id="IPR005147">
    <property type="entry name" value="tRNA_synthase_B5-dom"/>
</dbReference>
<dbReference type="NCBIfam" id="TIGR00472">
    <property type="entry name" value="pheT_bact"/>
    <property type="match status" value="1"/>
</dbReference>
<dbReference type="NCBIfam" id="NF045760">
    <property type="entry name" value="YtpR"/>
    <property type="match status" value="1"/>
</dbReference>
<dbReference type="PANTHER" id="PTHR10947:SF0">
    <property type="entry name" value="PHENYLALANINE--TRNA LIGASE BETA SUBUNIT"/>
    <property type="match status" value="1"/>
</dbReference>
<dbReference type="PANTHER" id="PTHR10947">
    <property type="entry name" value="PHENYLALANYL-TRNA SYNTHETASE BETA CHAIN AND LEUCINE-RICH REPEAT-CONTAINING PROTEIN 47"/>
    <property type="match status" value="1"/>
</dbReference>
<dbReference type="Pfam" id="PF03483">
    <property type="entry name" value="B3_4"/>
    <property type="match status" value="1"/>
</dbReference>
<dbReference type="Pfam" id="PF03484">
    <property type="entry name" value="B5"/>
    <property type="match status" value="1"/>
</dbReference>
<dbReference type="Pfam" id="PF03147">
    <property type="entry name" value="FDX-ACB"/>
    <property type="match status" value="1"/>
</dbReference>
<dbReference type="Pfam" id="PF01588">
    <property type="entry name" value="tRNA_bind"/>
    <property type="match status" value="1"/>
</dbReference>
<dbReference type="Pfam" id="PF17759">
    <property type="entry name" value="tRNA_synthFbeta"/>
    <property type="match status" value="1"/>
</dbReference>
<dbReference type="SMART" id="SM00873">
    <property type="entry name" value="B3_4"/>
    <property type="match status" value="1"/>
</dbReference>
<dbReference type="SMART" id="SM00874">
    <property type="entry name" value="B5"/>
    <property type="match status" value="1"/>
</dbReference>
<dbReference type="SMART" id="SM00896">
    <property type="entry name" value="FDX-ACB"/>
    <property type="match status" value="1"/>
</dbReference>
<dbReference type="SUPFAM" id="SSF54991">
    <property type="entry name" value="Anticodon-binding domain of PheRS"/>
    <property type="match status" value="1"/>
</dbReference>
<dbReference type="SUPFAM" id="SSF55681">
    <property type="entry name" value="Class II aaRS and biotin synthetases"/>
    <property type="match status" value="1"/>
</dbReference>
<dbReference type="SUPFAM" id="SSF50249">
    <property type="entry name" value="Nucleic acid-binding proteins"/>
    <property type="match status" value="1"/>
</dbReference>
<dbReference type="SUPFAM" id="SSF56037">
    <property type="entry name" value="PheT/TilS domain"/>
    <property type="match status" value="1"/>
</dbReference>
<dbReference type="SUPFAM" id="SSF46955">
    <property type="entry name" value="Putative DNA-binding domain"/>
    <property type="match status" value="1"/>
</dbReference>
<dbReference type="PROSITE" id="PS51483">
    <property type="entry name" value="B5"/>
    <property type="match status" value="1"/>
</dbReference>
<dbReference type="PROSITE" id="PS51447">
    <property type="entry name" value="FDX_ACB"/>
    <property type="match status" value="1"/>
</dbReference>
<dbReference type="PROSITE" id="PS50886">
    <property type="entry name" value="TRBD"/>
    <property type="match status" value="1"/>
</dbReference>
<sequence>MKFSESWLREWVNPAVSREALSHQITMAGLEVDGVDAVAAEFNGVVIGEVVECGLHPDADKLRVTKVSVGSSELIDIVCGAPNCRQGLKVAVAMVGAVLPGDFKIKKAKLRGMPSEGMLCSYSELGIDIDSDGIIELPLDAPLGTDLREYLKLDDAVIEVDLTANRADCLGMVGLAREVGVLNRQAVTEPQWQAVTPTTDAKVTINVKESAACPRYLGRVVKNVNVKAATPLWMQEKLRRSGIRSIDPIVDITNFVLVEFGQPMHAFDLAKLTGDIQVRLGNGEEKITLLDGSEVTIPSDTLVIADDARPLALAGVFGGEYSGVSDTTQDILLECAFFAPLAIMGKSRRLGLHTDSSHRFERGVDPEMQHKVIDRATRLVLDICGGEAGPVVEAKSDADLPKPAQILLRRSKLDKILGHYVPDSDVVEILERLGFSVVKGEGCWQVITATYRFDMAIEEDLIEEVARIYGYNNIPNVAPIASLRMSDHKETDLSLKRVRSLLVARGFQEAVTYSFVDPKLQNLVHPGEQAMVLPNPISSEMSAMRLSMFTGLLTAVGYNQSRQQGRVRLFETGLRFVPDINAESGVRQQAMLGCVITGPQNDEHWAMESKTVDFFDLKGDLEAIIGLTVSASEFSFRVATHSALHPGQCAEILRNDRVIGHIGAIHPSLEKPFGLNGKTIVFELELDALLHTSLPLAQAVSKFPANRRDIAVVVDESVSAGDVMKLIRKVGENQLVGINLFDVYLGKGVEPGKKSLAIALTLQDTTRTLEEKEIAETVESVVSALKTEFNASLRD</sequence>
<feature type="chain" id="PRO_0000126945" description="Phenylalanine--tRNA ligase beta subunit">
    <location>
        <begin position="1"/>
        <end position="795"/>
    </location>
</feature>
<feature type="domain" description="tRNA-binding" evidence="1">
    <location>
        <begin position="39"/>
        <end position="148"/>
    </location>
</feature>
<feature type="domain" description="B5" evidence="1">
    <location>
        <begin position="401"/>
        <end position="476"/>
    </location>
</feature>
<feature type="domain" description="FDX-ACB" evidence="1">
    <location>
        <begin position="701"/>
        <end position="794"/>
    </location>
</feature>
<feature type="binding site" evidence="1">
    <location>
        <position position="454"/>
    </location>
    <ligand>
        <name>Mg(2+)</name>
        <dbReference type="ChEBI" id="CHEBI:18420"/>
        <note>shared with alpha subunit</note>
    </ligand>
</feature>
<feature type="binding site" evidence="1">
    <location>
        <position position="460"/>
    </location>
    <ligand>
        <name>Mg(2+)</name>
        <dbReference type="ChEBI" id="CHEBI:18420"/>
        <note>shared with alpha subunit</note>
    </ligand>
</feature>
<feature type="binding site" evidence="1">
    <location>
        <position position="463"/>
    </location>
    <ligand>
        <name>Mg(2+)</name>
        <dbReference type="ChEBI" id="CHEBI:18420"/>
        <note>shared with alpha subunit</note>
    </ligand>
</feature>
<feature type="binding site" evidence="1">
    <location>
        <position position="464"/>
    </location>
    <ligand>
        <name>Mg(2+)</name>
        <dbReference type="ChEBI" id="CHEBI:18420"/>
        <note>shared with alpha subunit</note>
    </ligand>
</feature>
<organism>
    <name type="scientific">Shewanella oneidensis (strain ATCC 700550 / JCM 31522 / CIP 106686 / LMG 19005 / NCIMB 14063 / MR-1)</name>
    <dbReference type="NCBI Taxonomy" id="211586"/>
    <lineage>
        <taxon>Bacteria</taxon>
        <taxon>Pseudomonadati</taxon>
        <taxon>Pseudomonadota</taxon>
        <taxon>Gammaproteobacteria</taxon>
        <taxon>Alteromonadales</taxon>
        <taxon>Shewanellaceae</taxon>
        <taxon>Shewanella</taxon>
    </lineage>
</organism>
<proteinExistence type="inferred from homology"/>